<evidence type="ECO:0000255" key="1">
    <source>
        <dbReference type="HAMAP-Rule" id="MF_00023"/>
    </source>
</evidence>
<keyword id="KW-0963">Cytoplasm</keyword>
<keyword id="KW-1185">Reference proteome</keyword>
<keyword id="KW-0694">RNA-binding</keyword>
<protein>
    <recommendedName>
        <fullName evidence="1">SsrA-binding protein</fullName>
    </recommendedName>
    <alternativeName>
        <fullName evidence="1">Small protein B</fullName>
    </alternativeName>
</protein>
<sequence>MTKKKSHKPGSATIALNKRARHEYFIEDEIEAGLSLQGWEVKSLRAGKANISDSYVIMRDGEAYLFGATITPLNVASTHVVCDPTRTRKLLLKQRELANLYGQINRDGYTVVALSLYWKNAWCKIKIGVAKGKKDHDKRDTIKDREWKLDKARIMKNANR</sequence>
<feature type="chain" id="PRO_1000090173" description="SsrA-binding protein">
    <location>
        <begin position="1"/>
        <end position="160"/>
    </location>
</feature>
<dbReference type="EMBL" id="AM942759">
    <property type="protein sequence ID" value="CAR43952.1"/>
    <property type="molecule type" value="Genomic_DNA"/>
</dbReference>
<dbReference type="RefSeq" id="WP_004243915.1">
    <property type="nucleotide sequence ID" value="NC_010554.1"/>
</dbReference>
<dbReference type="SMR" id="B4F065"/>
<dbReference type="EnsemblBacteria" id="CAR43952">
    <property type="protein sequence ID" value="CAR43952"/>
    <property type="gene ID" value="PMI1906"/>
</dbReference>
<dbReference type="GeneID" id="6801483"/>
<dbReference type="KEGG" id="pmr:PMI1906"/>
<dbReference type="eggNOG" id="COG0691">
    <property type="taxonomic scope" value="Bacteria"/>
</dbReference>
<dbReference type="HOGENOM" id="CLU_108953_3_0_6"/>
<dbReference type="Proteomes" id="UP000008319">
    <property type="component" value="Chromosome"/>
</dbReference>
<dbReference type="GO" id="GO:0005829">
    <property type="term" value="C:cytosol"/>
    <property type="evidence" value="ECO:0007669"/>
    <property type="project" value="TreeGrafter"/>
</dbReference>
<dbReference type="GO" id="GO:0003723">
    <property type="term" value="F:RNA binding"/>
    <property type="evidence" value="ECO:0007669"/>
    <property type="project" value="UniProtKB-UniRule"/>
</dbReference>
<dbReference type="GO" id="GO:0070929">
    <property type="term" value="P:trans-translation"/>
    <property type="evidence" value="ECO:0007669"/>
    <property type="project" value="UniProtKB-UniRule"/>
</dbReference>
<dbReference type="CDD" id="cd09294">
    <property type="entry name" value="SmpB"/>
    <property type="match status" value="1"/>
</dbReference>
<dbReference type="Gene3D" id="2.40.280.10">
    <property type="match status" value="1"/>
</dbReference>
<dbReference type="HAMAP" id="MF_00023">
    <property type="entry name" value="SmpB"/>
    <property type="match status" value="1"/>
</dbReference>
<dbReference type="InterPro" id="IPR023620">
    <property type="entry name" value="SmpB"/>
</dbReference>
<dbReference type="InterPro" id="IPR000037">
    <property type="entry name" value="SsrA-bd_prot"/>
</dbReference>
<dbReference type="InterPro" id="IPR020081">
    <property type="entry name" value="SsrA-bd_prot_CS"/>
</dbReference>
<dbReference type="NCBIfam" id="NF003843">
    <property type="entry name" value="PRK05422.1"/>
    <property type="match status" value="1"/>
</dbReference>
<dbReference type="NCBIfam" id="TIGR00086">
    <property type="entry name" value="smpB"/>
    <property type="match status" value="1"/>
</dbReference>
<dbReference type="PANTHER" id="PTHR30308:SF2">
    <property type="entry name" value="SSRA-BINDING PROTEIN"/>
    <property type="match status" value="1"/>
</dbReference>
<dbReference type="PANTHER" id="PTHR30308">
    <property type="entry name" value="TMRNA-BINDING COMPONENT OF TRANS-TRANSLATION TAGGING COMPLEX"/>
    <property type="match status" value="1"/>
</dbReference>
<dbReference type="Pfam" id="PF01668">
    <property type="entry name" value="SmpB"/>
    <property type="match status" value="1"/>
</dbReference>
<dbReference type="SUPFAM" id="SSF74982">
    <property type="entry name" value="Small protein B (SmpB)"/>
    <property type="match status" value="1"/>
</dbReference>
<dbReference type="PROSITE" id="PS01317">
    <property type="entry name" value="SSRP"/>
    <property type="match status" value="1"/>
</dbReference>
<comment type="function">
    <text evidence="1">Required for rescue of stalled ribosomes mediated by trans-translation. Binds to transfer-messenger RNA (tmRNA), required for stable association of tmRNA with ribosomes. tmRNA and SmpB together mimic tRNA shape, replacing the anticodon stem-loop with SmpB. tmRNA is encoded by the ssrA gene; the 2 termini fold to resemble tRNA(Ala) and it encodes a 'tag peptide', a short internal open reading frame. During trans-translation Ala-aminoacylated tmRNA acts like a tRNA, entering the A-site of stalled ribosomes, displacing the stalled mRNA. The ribosome then switches to translate the ORF on the tmRNA; the nascent peptide is terminated with the 'tag peptide' encoded by the tmRNA and targeted for degradation. The ribosome is freed to recommence translation, which seems to be the essential function of trans-translation.</text>
</comment>
<comment type="subcellular location">
    <subcellularLocation>
        <location evidence="1">Cytoplasm</location>
    </subcellularLocation>
    <text evidence="1">The tmRNA-SmpB complex associates with stalled 70S ribosomes.</text>
</comment>
<comment type="similarity">
    <text evidence="1">Belongs to the SmpB family.</text>
</comment>
<organism>
    <name type="scientific">Proteus mirabilis (strain HI4320)</name>
    <dbReference type="NCBI Taxonomy" id="529507"/>
    <lineage>
        <taxon>Bacteria</taxon>
        <taxon>Pseudomonadati</taxon>
        <taxon>Pseudomonadota</taxon>
        <taxon>Gammaproteobacteria</taxon>
        <taxon>Enterobacterales</taxon>
        <taxon>Morganellaceae</taxon>
        <taxon>Proteus</taxon>
    </lineage>
</organism>
<reference key="1">
    <citation type="journal article" date="2008" name="J. Bacteriol.">
        <title>Complete genome sequence of uropathogenic Proteus mirabilis, a master of both adherence and motility.</title>
        <authorList>
            <person name="Pearson M.M."/>
            <person name="Sebaihia M."/>
            <person name="Churcher C."/>
            <person name="Quail M.A."/>
            <person name="Seshasayee A.S."/>
            <person name="Luscombe N.M."/>
            <person name="Abdellah Z."/>
            <person name="Arrosmith C."/>
            <person name="Atkin B."/>
            <person name="Chillingworth T."/>
            <person name="Hauser H."/>
            <person name="Jagels K."/>
            <person name="Moule S."/>
            <person name="Mungall K."/>
            <person name="Norbertczak H."/>
            <person name="Rabbinowitsch E."/>
            <person name="Walker D."/>
            <person name="Whithead S."/>
            <person name="Thomson N.R."/>
            <person name="Rather P.N."/>
            <person name="Parkhill J."/>
            <person name="Mobley H.L.T."/>
        </authorList>
    </citation>
    <scope>NUCLEOTIDE SEQUENCE [LARGE SCALE GENOMIC DNA]</scope>
    <source>
        <strain>HI4320</strain>
    </source>
</reference>
<accession>B4F065</accession>
<proteinExistence type="inferred from homology"/>
<gene>
    <name evidence="1" type="primary">smpB</name>
    <name type="ordered locus">PMI1906</name>
</gene>
<name>SSRP_PROMH</name>